<sequence length="97" mass="11231">MSLLTEVETPIRSEWECRCNDSSDPLVVAASIIGILHLILWILDRLFFKCIYRFFEHGLKRGPSTEGVPESMREEYRKEQQSAVDADDSHFVSIELE</sequence>
<organismHost>
    <name type="scientific">Aves</name>
    <dbReference type="NCBI Taxonomy" id="8782"/>
</organismHost>
<organismHost>
    <name type="scientific">Cetacea</name>
    <name type="common">whales</name>
    <dbReference type="NCBI Taxonomy" id="9721"/>
</organismHost>
<organismHost>
    <name type="scientific">Homo sapiens</name>
    <name type="common">Human</name>
    <dbReference type="NCBI Taxonomy" id="9606"/>
</organismHost>
<organismHost>
    <name type="scientific">Phocidae</name>
    <name type="common">true seals</name>
    <dbReference type="NCBI Taxonomy" id="9709"/>
</organismHost>
<organismHost>
    <name type="scientific">Sus scrofa</name>
    <name type="common">Pig</name>
    <dbReference type="NCBI Taxonomy" id="9823"/>
</organismHost>
<feature type="chain" id="PRO_0000326355" description="Matrix protein 2">
    <location>
        <begin position="1"/>
        <end position="97"/>
    </location>
</feature>
<feature type="topological domain" description="Virion surface" evidence="1">
    <location>
        <begin position="1"/>
        <end position="22"/>
    </location>
</feature>
<feature type="transmembrane region" description="Helical; Signal-anchor for type III membrane protein" evidence="1">
    <location>
        <begin position="23"/>
        <end position="43"/>
    </location>
</feature>
<feature type="topological domain" description="Intravirion" evidence="1">
    <location>
        <begin position="44"/>
        <end position="97"/>
    </location>
</feature>
<feature type="region of interest" description="Disordered" evidence="2">
    <location>
        <begin position="59"/>
        <end position="88"/>
    </location>
</feature>
<feature type="compositionally biased region" description="Basic and acidic residues" evidence="2">
    <location>
        <begin position="71"/>
        <end position="80"/>
    </location>
</feature>
<feature type="site" description="Essential for channel activity, possibly by being protonated during channel activation, and by forming the channel gate and the selective filter" evidence="1">
    <location>
        <position position="37"/>
    </location>
</feature>
<feature type="site" description="Seems to be involved in pH gating" evidence="1">
    <location>
        <position position="41"/>
    </location>
</feature>
<feature type="modified residue" description="Phosphoserine; by host" evidence="1">
    <location>
        <position position="64"/>
    </location>
</feature>
<feature type="modified residue" description="Phosphoserine; by host" evidence="1">
    <location>
        <position position="82"/>
    </location>
</feature>
<feature type="modified residue" description="Phosphoserine; by host" evidence="1">
    <location>
        <position position="93"/>
    </location>
</feature>
<feature type="lipid moiety-binding region" description="S-palmitoyl cysteine; by host" evidence="1">
    <location>
        <position position="50"/>
    </location>
</feature>
<feature type="glycosylation site" description="N-linked (GlcNAc...) asparagine; by host" evidence="1">
    <location>
        <position position="20"/>
    </location>
</feature>
<feature type="disulfide bond" description="Interchain (with C-17)" evidence="1">
    <location>
        <position position="17"/>
    </location>
</feature>
<feature type="disulfide bond" description="Interchain (with C-19)" evidence="1">
    <location>
        <position position="19"/>
    </location>
</feature>
<evidence type="ECO:0000255" key="1">
    <source>
        <dbReference type="HAMAP-Rule" id="MF_04069"/>
    </source>
</evidence>
<evidence type="ECO:0000256" key="2">
    <source>
        <dbReference type="SAM" id="MobiDB-lite"/>
    </source>
</evidence>
<gene>
    <name evidence="1" type="primary">M</name>
</gene>
<name>M2_I75A0</name>
<reference key="1">
    <citation type="submission" date="2005-11" db="EMBL/GenBank/DDBJ databases">
        <title>The NIAID influenza genome sequencing project.</title>
        <authorList>
            <person name="Ghedin E."/>
            <person name="Spiro D."/>
            <person name="Miller N."/>
            <person name="Zaborsky J."/>
            <person name="Feldblyum T."/>
            <person name="Subbu V."/>
            <person name="Shumway M."/>
            <person name="Sparenborg J."/>
            <person name="Groveman L."/>
            <person name="Halpin R."/>
            <person name="Sitz J."/>
            <person name="Koo H."/>
            <person name="Salzberg S.L."/>
            <person name="Webster R.G."/>
            <person name="Hoffmann E."/>
            <person name="Krauss S."/>
            <person name="Naeve C."/>
            <person name="Bao Y."/>
            <person name="Bolotov P."/>
            <person name="Dernovoy D."/>
            <person name="Kiryutin B."/>
            <person name="Lipman D.J."/>
            <person name="Tatusova T."/>
        </authorList>
    </citation>
    <scope>NUCLEOTIDE SEQUENCE [GENOMIC RNA]</scope>
    <source>
        <strain>A/Beijing/39/75</strain>
    </source>
</reference>
<organism>
    <name type="scientific">Influenza A virus (strain A/Beijing/39/1975 H3N2)</name>
    <dbReference type="NCBI Taxonomy" id="383596"/>
    <lineage>
        <taxon>Viruses</taxon>
        <taxon>Riboviria</taxon>
        <taxon>Orthornavirae</taxon>
        <taxon>Negarnaviricota</taxon>
        <taxon>Polyploviricotina</taxon>
        <taxon>Insthoviricetes</taxon>
        <taxon>Articulavirales</taxon>
        <taxon>Orthomyxoviridae</taxon>
        <taxon>Alphainfluenzavirus</taxon>
        <taxon>Alphainfluenzavirus influenzae</taxon>
        <taxon>Influenza A virus</taxon>
    </lineage>
</organism>
<proteinExistence type="inferred from homology"/>
<protein>
    <recommendedName>
        <fullName evidence="1">Matrix protein 2</fullName>
    </recommendedName>
    <alternativeName>
        <fullName evidence="1">Proton channel protein M2</fullName>
    </alternativeName>
</protein>
<comment type="function">
    <text evidence="1">Forms a proton-selective ion channel that is necessary for the efficient release of the viral genome during virus entry. After attaching to the cell surface, the virion enters the cell by endocytosis. Acidification of the endosome triggers M2 ion channel activity. The influx of protons into virion interior is believed to disrupt interactions between the viral ribonucleoprotein (RNP), matrix protein 1 (M1), and lipid bilayers, thereby freeing the viral genome from interaction with viral proteins and enabling RNA segments to migrate to the host cell nucleus, where influenza virus RNA transcription and replication occur. Also plays a role in viral proteins secretory pathway. Elevates the intravesicular pH of normally acidic compartments, such as trans-Golgi network, preventing newly formed hemagglutinin from premature switching to the fusion-active conformation.</text>
</comment>
<comment type="activity regulation">
    <text>The M2 protein from most influenza A strains is inhibited by amantadine and rimantadine, resulting in viral uncoating incapacity. Emergence of amantadine-resistant variants is usually rapid.</text>
</comment>
<comment type="subunit">
    <text evidence="1">Homotetramer; composed of two disulfide-linked dimers held together by non-covalent interactions. May interact with matrix protein 1.</text>
</comment>
<comment type="subcellular location">
    <subcellularLocation>
        <location evidence="1">Virion membrane</location>
    </subcellularLocation>
    <subcellularLocation>
        <location evidence="1">Host apical cell membrane</location>
        <topology evidence="1">Single-pass type III membrane protein</topology>
    </subcellularLocation>
    <text evidence="1">Abundantly expressed at the apical plasma membrane in infected polarized epithelial cells, in close proximity to budding and assembled virions. Minor component of virions (only 16-20 molecules/virion).</text>
</comment>
<comment type="alternative products">
    <event type="alternative splicing"/>
    <isoform>
        <id>Q30NQ0-1</id>
        <name>M2</name>
        <sequence type="displayed"/>
    </isoform>
    <isoform>
        <id>Q30NP9-1</id>
        <name>M1</name>
        <sequence type="external"/>
    </isoform>
    <text>Only the first 9 residues are shared by the 2 isoforms.</text>
</comment>
<comment type="domain">
    <text evidence="1">Cytoplasmic tail plays an important role in virion assembly and morphogenesis.</text>
</comment>
<comment type="miscellaneous">
    <text evidence="1">When the channel is activated, one or more imidazole moieties of His-37 probably become bi-protonated.</text>
</comment>
<comment type="similarity">
    <text evidence="1">Belongs to the influenza viruses matrix protein M2 family.</text>
</comment>
<dbReference type="EMBL" id="CY006045">
    <property type="protein sequence ID" value="ABB46394.1"/>
    <property type="molecule type" value="Genomic_RNA"/>
</dbReference>
<dbReference type="SMR" id="Q30NQ0"/>
<dbReference type="IntAct" id="Q30NQ0">
    <property type="interactions" value="1"/>
</dbReference>
<dbReference type="GlyCosmos" id="Q30NQ0">
    <property type="glycosylation" value="1 site, No reported glycans"/>
</dbReference>
<dbReference type="Proteomes" id="UP000000827">
    <property type="component" value="Genome"/>
</dbReference>
<dbReference type="GO" id="GO:0020002">
    <property type="term" value="C:host cell plasma membrane"/>
    <property type="evidence" value="ECO:0007669"/>
    <property type="project" value="UniProtKB-SubCell"/>
</dbReference>
<dbReference type="GO" id="GO:0016020">
    <property type="term" value="C:membrane"/>
    <property type="evidence" value="ECO:0007669"/>
    <property type="project" value="UniProtKB-UniRule"/>
</dbReference>
<dbReference type="GO" id="GO:0055036">
    <property type="term" value="C:virion membrane"/>
    <property type="evidence" value="ECO:0007669"/>
    <property type="project" value="UniProtKB-SubCell"/>
</dbReference>
<dbReference type="GO" id="GO:0005216">
    <property type="term" value="F:monoatomic ion channel activity"/>
    <property type="evidence" value="ECO:0007669"/>
    <property type="project" value="UniProtKB-UniRule"/>
</dbReference>
<dbReference type="GO" id="GO:0015078">
    <property type="term" value="F:proton transmembrane transporter activity"/>
    <property type="evidence" value="ECO:0007669"/>
    <property type="project" value="UniProtKB-UniRule"/>
</dbReference>
<dbReference type="GO" id="GO:0051259">
    <property type="term" value="P:protein complex oligomerization"/>
    <property type="evidence" value="ECO:0007669"/>
    <property type="project" value="UniProtKB-UniRule"/>
</dbReference>
<dbReference type="GO" id="GO:0044694">
    <property type="term" value="P:symbiont genome entry into host cell via pore formation in plasma membrane"/>
    <property type="evidence" value="ECO:0007669"/>
    <property type="project" value="UniProtKB-UniRule"/>
</dbReference>
<dbReference type="GO" id="GO:0140321">
    <property type="term" value="P:symbiont-mediated suppression of host autophagy"/>
    <property type="evidence" value="ECO:0007669"/>
    <property type="project" value="UniProtKB-KW"/>
</dbReference>
<dbReference type="Gene3D" id="6.10.250.1640">
    <property type="match status" value="1"/>
</dbReference>
<dbReference type="HAMAP" id="MF_04069">
    <property type="entry name" value="INFV_M2"/>
    <property type="match status" value="1"/>
</dbReference>
<dbReference type="InterPro" id="IPR002089">
    <property type="entry name" value="Flu_M2"/>
</dbReference>
<dbReference type="Pfam" id="PF00599">
    <property type="entry name" value="Flu_M2"/>
    <property type="match status" value="1"/>
</dbReference>
<keyword id="KW-0025">Alternative splicing</keyword>
<keyword id="KW-1015">Disulfide bond</keyword>
<keyword id="KW-0325">Glycoprotein</keyword>
<keyword id="KW-1032">Host cell membrane</keyword>
<keyword id="KW-1043">Host membrane</keyword>
<keyword id="KW-0945">Host-virus interaction</keyword>
<keyword id="KW-0375">Hydrogen ion transport</keyword>
<keyword id="KW-1083">Inhibition of host autophagy by virus</keyword>
<keyword id="KW-0407">Ion channel</keyword>
<keyword id="KW-0406">Ion transport</keyword>
<keyword id="KW-0449">Lipoprotein</keyword>
<keyword id="KW-0472">Membrane</keyword>
<keyword id="KW-0564">Palmitate</keyword>
<keyword id="KW-0597">Phosphoprotein</keyword>
<keyword id="KW-0735">Signal-anchor</keyword>
<keyword id="KW-0812">Transmembrane</keyword>
<keyword id="KW-1133">Transmembrane helix</keyword>
<keyword id="KW-0813">Transport</keyword>
<keyword id="KW-1182">Viral ion channel</keyword>
<keyword id="KW-0946">Virion</keyword>
<accession>Q30NQ0</accession>